<feature type="chain" id="PRO_0000236996" description="Chaperone protein HtpG">
    <location>
        <begin position="1"/>
        <end position="641"/>
    </location>
</feature>
<feature type="region of interest" description="A; substrate-binding" evidence="1">
    <location>
        <begin position="1"/>
        <end position="348"/>
    </location>
</feature>
<feature type="region of interest" description="B" evidence="1">
    <location>
        <begin position="349"/>
        <end position="565"/>
    </location>
</feature>
<feature type="region of interest" description="C" evidence="1">
    <location>
        <begin position="566"/>
        <end position="641"/>
    </location>
</feature>
<proteinExistence type="inferred from homology"/>
<organism>
    <name type="scientific">Hahella chejuensis (strain KCTC 2396)</name>
    <dbReference type="NCBI Taxonomy" id="349521"/>
    <lineage>
        <taxon>Bacteria</taxon>
        <taxon>Pseudomonadati</taxon>
        <taxon>Pseudomonadota</taxon>
        <taxon>Gammaproteobacteria</taxon>
        <taxon>Oceanospirillales</taxon>
        <taxon>Hahellaceae</taxon>
        <taxon>Hahella</taxon>
    </lineage>
</organism>
<sequence length="641" mass="73296">MTTATEKQTLGFQAEVKQLLHLMIHSLYSNKEIFLRELVSNASDALDKLRFQALSKEDLYEGDNDLKVRLEFDDKAQTITLSDNGIGMSRDEVVTNLGTIAKSGTAEFLSTLTGDQKQDSRLIGQFGVGFYSAFIVADKVEVYTRRAGLKPDEAVHWESSGEGDFSIETVTKEERGTRIVLHLKDEEKEFANGWRLRSLVKKYSDHISFPVEMIKENMDVGEEEEGKEKAEPAPEFESVNEATALWTLPRNEIKDEDYKEFYKHIAHDFSDPLLWAHNRVEGKLDYTSLLYVPAKAPYDLWNREAPRGLKLYIQRVFIMDDAEQFLPLYLRFVKGVVDSNDLSLNVSREILQNDKAVESMRSALTKRVLDMLSKLAADDAEKYQSFWDEFGRVLKEGPAEDFINREKIAKLMRFSSTHQDDDKQTQSLEDYVSRMKQGQDKIYYITAESYSAGVKSPHLEIFRKKGIEVLVMHDRIDEWLMSHLNEFDGKHFQDIAKGELDLGEVEDKEEKEKQEEVSKEAEPLLNRLKEVLKDHVEEVRVTHRLTDSPACLVVGAYDMGVQMRRIMEAAGQALPESKPTFEINPDHPLVKKLGEEQGARFEDLTWVLFDQARLAGGENLKDPAGYVSRLNKLLLELSNAG</sequence>
<gene>
    <name evidence="1" type="primary">htpG</name>
    <name type="ordered locus">HCH_02063</name>
</gene>
<evidence type="ECO:0000255" key="1">
    <source>
        <dbReference type="HAMAP-Rule" id="MF_00505"/>
    </source>
</evidence>
<protein>
    <recommendedName>
        <fullName evidence="1">Chaperone protein HtpG</fullName>
    </recommendedName>
    <alternativeName>
        <fullName evidence="1">Heat shock protein HtpG</fullName>
    </alternativeName>
    <alternativeName>
        <fullName evidence="1">High temperature protein G</fullName>
    </alternativeName>
</protein>
<comment type="function">
    <text evidence="1">Molecular chaperone. Has ATPase activity.</text>
</comment>
<comment type="subunit">
    <text evidence="1">Homodimer.</text>
</comment>
<comment type="subcellular location">
    <subcellularLocation>
        <location evidence="1">Cytoplasm</location>
    </subcellularLocation>
</comment>
<comment type="similarity">
    <text evidence="1">Belongs to the heat shock protein 90 family.</text>
</comment>
<name>HTPG_HAHCH</name>
<keyword id="KW-0067">ATP-binding</keyword>
<keyword id="KW-0143">Chaperone</keyword>
<keyword id="KW-0963">Cytoplasm</keyword>
<keyword id="KW-0547">Nucleotide-binding</keyword>
<keyword id="KW-1185">Reference proteome</keyword>
<keyword id="KW-0346">Stress response</keyword>
<dbReference type="EMBL" id="CP000155">
    <property type="protein sequence ID" value="ABC28894.1"/>
    <property type="molecule type" value="Genomic_DNA"/>
</dbReference>
<dbReference type="RefSeq" id="WP_011395965.1">
    <property type="nucleotide sequence ID" value="NC_007645.1"/>
</dbReference>
<dbReference type="SMR" id="Q2SKD0"/>
<dbReference type="STRING" id="349521.HCH_02063"/>
<dbReference type="KEGG" id="hch:HCH_02063"/>
<dbReference type="eggNOG" id="COG0326">
    <property type="taxonomic scope" value="Bacteria"/>
</dbReference>
<dbReference type="HOGENOM" id="CLU_006684_3_0_6"/>
<dbReference type="OrthoDB" id="9802640at2"/>
<dbReference type="Proteomes" id="UP000000238">
    <property type="component" value="Chromosome"/>
</dbReference>
<dbReference type="GO" id="GO:0005737">
    <property type="term" value="C:cytoplasm"/>
    <property type="evidence" value="ECO:0007669"/>
    <property type="project" value="UniProtKB-SubCell"/>
</dbReference>
<dbReference type="GO" id="GO:0005524">
    <property type="term" value="F:ATP binding"/>
    <property type="evidence" value="ECO:0007669"/>
    <property type="project" value="UniProtKB-UniRule"/>
</dbReference>
<dbReference type="GO" id="GO:0016887">
    <property type="term" value="F:ATP hydrolysis activity"/>
    <property type="evidence" value="ECO:0007669"/>
    <property type="project" value="InterPro"/>
</dbReference>
<dbReference type="GO" id="GO:0140662">
    <property type="term" value="F:ATP-dependent protein folding chaperone"/>
    <property type="evidence" value="ECO:0007669"/>
    <property type="project" value="InterPro"/>
</dbReference>
<dbReference type="GO" id="GO:0051082">
    <property type="term" value="F:unfolded protein binding"/>
    <property type="evidence" value="ECO:0007669"/>
    <property type="project" value="UniProtKB-UniRule"/>
</dbReference>
<dbReference type="CDD" id="cd16927">
    <property type="entry name" value="HATPase_Hsp90-like"/>
    <property type="match status" value="1"/>
</dbReference>
<dbReference type="FunFam" id="3.30.230.80:FF:000002">
    <property type="entry name" value="Molecular chaperone HtpG"/>
    <property type="match status" value="1"/>
</dbReference>
<dbReference type="FunFam" id="3.30.565.10:FF:000009">
    <property type="entry name" value="Molecular chaperone HtpG"/>
    <property type="match status" value="1"/>
</dbReference>
<dbReference type="Gene3D" id="3.30.230.80">
    <property type="match status" value="1"/>
</dbReference>
<dbReference type="Gene3D" id="3.40.50.11260">
    <property type="match status" value="1"/>
</dbReference>
<dbReference type="Gene3D" id="1.20.120.790">
    <property type="entry name" value="Heat shock protein 90, C-terminal domain"/>
    <property type="match status" value="1"/>
</dbReference>
<dbReference type="Gene3D" id="3.30.565.10">
    <property type="entry name" value="Histidine kinase-like ATPase, C-terminal domain"/>
    <property type="match status" value="1"/>
</dbReference>
<dbReference type="HAMAP" id="MF_00505">
    <property type="entry name" value="HSP90"/>
    <property type="match status" value="1"/>
</dbReference>
<dbReference type="InterPro" id="IPR036890">
    <property type="entry name" value="HATPase_C_sf"/>
</dbReference>
<dbReference type="InterPro" id="IPR019805">
    <property type="entry name" value="Heat_shock_protein_90_CS"/>
</dbReference>
<dbReference type="InterPro" id="IPR037196">
    <property type="entry name" value="HSP90_C"/>
</dbReference>
<dbReference type="InterPro" id="IPR001404">
    <property type="entry name" value="Hsp90_fam"/>
</dbReference>
<dbReference type="InterPro" id="IPR020575">
    <property type="entry name" value="Hsp90_N"/>
</dbReference>
<dbReference type="InterPro" id="IPR020568">
    <property type="entry name" value="Ribosomal_Su5_D2-typ_SF"/>
</dbReference>
<dbReference type="NCBIfam" id="NF003555">
    <property type="entry name" value="PRK05218.1"/>
    <property type="match status" value="1"/>
</dbReference>
<dbReference type="PANTHER" id="PTHR11528">
    <property type="entry name" value="HEAT SHOCK PROTEIN 90 FAMILY MEMBER"/>
    <property type="match status" value="1"/>
</dbReference>
<dbReference type="Pfam" id="PF13589">
    <property type="entry name" value="HATPase_c_3"/>
    <property type="match status" value="1"/>
</dbReference>
<dbReference type="Pfam" id="PF00183">
    <property type="entry name" value="HSP90"/>
    <property type="match status" value="1"/>
</dbReference>
<dbReference type="PIRSF" id="PIRSF002583">
    <property type="entry name" value="Hsp90"/>
    <property type="match status" value="1"/>
</dbReference>
<dbReference type="PRINTS" id="PR00775">
    <property type="entry name" value="HEATSHOCK90"/>
</dbReference>
<dbReference type="SMART" id="SM00387">
    <property type="entry name" value="HATPase_c"/>
    <property type="match status" value="1"/>
</dbReference>
<dbReference type="SUPFAM" id="SSF55874">
    <property type="entry name" value="ATPase domain of HSP90 chaperone/DNA topoisomerase II/histidine kinase"/>
    <property type="match status" value="1"/>
</dbReference>
<dbReference type="SUPFAM" id="SSF110942">
    <property type="entry name" value="HSP90 C-terminal domain"/>
    <property type="match status" value="1"/>
</dbReference>
<dbReference type="SUPFAM" id="SSF54211">
    <property type="entry name" value="Ribosomal protein S5 domain 2-like"/>
    <property type="match status" value="1"/>
</dbReference>
<dbReference type="PROSITE" id="PS00298">
    <property type="entry name" value="HSP90"/>
    <property type="match status" value="1"/>
</dbReference>
<accession>Q2SKD0</accession>
<reference key="1">
    <citation type="journal article" date="2005" name="Nucleic Acids Res.">
        <title>Genomic blueprint of Hahella chejuensis, a marine microbe producing an algicidal agent.</title>
        <authorList>
            <person name="Jeong H."/>
            <person name="Yim J.H."/>
            <person name="Lee C."/>
            <person name="Choi S.-H."/>
            <person name="Park Y.K."/>
            <person name="Yoon S.H."/>
            <person name="Hur C.-G."/>
            <person name="Kang H.-Y."/>
            <person name="Kim D."/>
            <person name="Lee H.H."/>
            <person name="Park K.H."/>
            <person name="Park S.-H."/>
            <person name="Park H.-S."/>
            <person name="Lee H.K."/>
            <person name="Oh T.K."/>
            <person name="Kim J.F."/>
        </authorList>
    </citation>
    <scope>NUCLEOTIDE SEQUENCE [LARGE SCALE GENOMIC DNA]</scope>
    <source>
        <strain>KCTC 2396</strain>
    </source>
</reference>